<evidence type="ECO:0000255" key="1">
    <source>
        <dbReference type="HAMAP-Rule" id="MF_00563"/>
    </source>
</evidence>
<comment type="function">
    <text evidence="1">May play a key role in the regulation of the intracellular concentration of adenosylhomocysteine.</text>
</comment>
<comment type="catalytic activity">
    <reaction evidence="1">
        <text>S-adenosyl-L-homocysteine + H2O = L-homocysteine + adenosine</text>
        <dbReference type="Rhea" id="RHEA:21708"/>
        <dbReference type="ChEBI" id="CHEBI:15377"/>
        <dbReference type="ChEBI" id="CHEBI:16335"/>
        <dbReference type="ChEBI" id="CHEBI:57856"/>
        <dbReference type="ChEBI" id="CHEBI:58199"/>
        <dbReference type="EC" id="3.13.2.1"/>
    </reaction>
</comment>
<comment type="cofactor">
    <cofactor evidence="1">
        <name>NAD(+)</name>
        <dbReference type="ChEBI" id="CHEBI:57540"/>
    </cofactor>
    <text evidence="1">Binds 1 NAD(+) per subunit.</text>
</comment>
<comment type="pathway">
    <text evidence="1">Amino-acid biosynthesis; L-homocysteine biosynthesis; L-homocysteine from S-adenosyl-L-homocysteine: step 1/1.</text>
</comment>
<comment type="subcellular location">
    <subcellularLocation>
        <location evidence="1">Cytoplasm</location>
    </subcellularLocation>
</comment>
<comment type="similarity">
    <text evidence="1">Belongs to the adenosylhomocysteinase family.</text>
</comment>
<organism>
    <name type="scientific">Mycobacterium sp. (strain KMS)</name>
    <dbReference type="NCBI Taxonomy" id="189918"/>
    <lineage>
        <taxon>Bacteria</taxon>
        <taxon>Bacillati</taxon>
        <taxon>Actinomycetota</taxon>
        <taxon>Actinomycetes</taxon>
        <taxon>Mycobacteriales</taxon>
        <taxon>Mycobacteriaceae</taxon>
        <taxon>Mycobacterium</taxon>
    </lineage>
</organism>
<dbReference type="EC" id="3.13.2.1" evidence="1"/>
<dbReference type="EMBL" id="CP000518">
    <property type="protein sequence ID" value="ABL90566.1"/>
    <property type="molecule type" value="Genomic_DNA"/>
</dbReference>
<dbReference type="SMR" id="A1UCK8"/>
<dbReference type="STRING" id="189918.Mkms_1354"/>
<dbReference type="KEGG" id="mkm:Mkms_1354"/>
<dbReference type="HOGENOM" id="CLU_025194_2_1_11"/>
<dbReference type="OrthoDB" id="9802717at2"/>
<dbReference type="UniPathway" id="UPA00314">
    <property type="reaction ID" value="UER00076"/>
</dbReference>
<dbReference type="GO" id="GO:0005829">
    <property type="term" value="C:cytosol"/>
    <property type="evidence" value="ECO:0007669"/>
    <property type="project" value="TreeGrafter"/>
</dbReference>
<dbReference type="GO" id="GO:0004013">
    <property type="term" value="F:adenosylhomocysteinase activity"/>
    <property type="evidence" value="ECO:0007669"/>
    <property type="project" value="UniProtKB-UniRule"/>
</dbReference>
<dbReference type="GO" id="GO:0071269">
    <property type="term" value="P:L-homocysteine biosynthetic process"/>
    <property type="evidence" value="ECO:0007669"/>
    <property type="project" value="UniProtKB-UniRule"/>
</dbReference>
<dbReference type="GO" id="GO:0006730">
    <property type="term" value="P:one-carbon metabolic process"/>
    <property type="evidence" value="ECO:0007669"/>
    <property type="project" value="UniProtKB-KW"/>
</dbReference>
<dbReference type="GO" id="GO:0033353">
    <property type="term" value="P:S-adenosylmethionine cycle"/>
    <property type="evidence" value="ECO:0007669"/>
    <property type="project" value="TreeGrafter"/>
</dbReference>
<dbReference type="CDD" id="cd00401">
    <property type="entry name" value="SAHH"/>
    <property type="match status" value="1"/>
</dbReference>
<dbReference type="FunFam" id="3.40.50.720:FF:000004">
    <property type="entry name" value="Adenosylhomocysteinase"/>
    <property type="match status" value="1"/>
</dbReference>
<dbReference type="Gene3D" id="3.40.50.1480">
    <property type="entry name" value="Adenosylhomocysteinase-like"/>
    <property type="match status" value="1"/>
</dbReference>
<dbReference type="Gene3D" id="3.40.50.720">
    <property type="entry name" value="NAD(P)-binding Rossmann-like Domain"/>
    <property type="match status" value="1"/>
</dbReference>
<dbReference type="HAMAP" id="MF_00563">
    <property type="entry name" value="AdoHcyase"/>
    <property type="match status" value="1"/>
</dbReference>
<dbReference type="InterPro" id="IPR042172">
    <property type="entry name" value="Adenosylhomocyst_ase-like_sf"/>
</dbReference>
<dbReference type="InterPro" id="IPR000043">
    <property type="entry name" value="Adenosylhomocysteinase-like"/>
</dbReference>
<dbReference type="InterPro" id="IPR015878">
    <property type="entry name" value="Ado_hCys_hydrolase_NAD-bd"/>
</dbReference>
<dbReference type="InterPro" id="IPR036291">
    <property type="entry name" value="NAD(P)-bd_dom_sf"/>
</dbReference>
<dbReference type="InterPro" id="IPR020082">
    <property type="entry name" value="S-Ado-L-homoCys_hydrolase_CS"/>
</dbReference>
<dbReference type="NCBIfam" id="TIGR00936">
    <property type="entry name" value="ahcY"/>
    <property type="match status" value="1"/>
</dbReference>
<dbReference type="NCBIfam" id="NF004005">
    <property type="entry name" value="PRK05476.2-3"/>
    <property type="match status" value="1"/>
</dbReference>
<dbReference type="PANTHER" id="PTHR23420">
    <property type="entry name" value="ADENOSYLHOMOCYSTEINASE"/>
    <property type="match status" value="1"/>
</dbReference>
<dbReference type="PANTHER" id="PTHR23420:SF0">
    <property type="entry name" value="ADENOSYLHOMOCYSTEINASE"/>
    <property type="match status" value="1"/>
</dbReference>
<dbReference type="Pfam" id="PF05221">
    <property type="entry name" value="AdoHcyase"/>
    <property type="match status" value="1"/>
</dbReference>
<dbReference type="Pfam" id="PF00670">
    <property type="entry name" value="AdoHcyase_NAD"/>
    <property type="match status" value="1"/>
</dbReference>
<dbReference type="PIRSF" id="PIRSF001109">
    <property type="entry name" value="Ad_hcy_hydrolase"/>
    <property type="match status" value="1"/>
</dbReference>
<dbReference type="SMART" id="SM00996">
    <property type="entry name" value="AdoHcyase"/>
    <property type="match status" value="1"/>
</dbReference>
<dbReference type="SMART" id="SM00997">
    <property type="entry name" value="AdoHcyase_NAD"/>
    <property type="match status" value="1"/>
</dbReference>
<dbReference type="SUPFAM" id="SSF52283">
    <property type="entry name" value="Formate/glycerate dehydrogenase catalytic domain-like"/>
    <property type="match status" value="1"/>
</dbReference>
<dbReference type="SUPFAM" id="SSF51735">
    <property type="entry name" value="NAD(P)-binding Rossmann-fold domains"/>
    <property type="match status" value="1"/>
</dbReference>
<dbReference type="PROSITE" id="PS00738">
    <property type="entry name" value="ADOHCYASE_1"/>
    <property type="match status" value="1"/>
</dbReference>
<dbReference type="PROSITE" id="PS00739">
    <property type="entry name" value="ADOHCYASE_2"/>
    <property type="match status" value="1"/>
</dbReference>
<name>SAHH_MYCSK</name>
<sequence length="489" mass="53727">MTTTEQRLTVESRNGIDYKVADLSLAEFGRKEIRLAEHEMPGLMALRREYAEVAPLKGARISGSLHMTVQTAVLIETLVSLGAEVRWASCNIFSTQDHAAAAVVVGPHGTPEEPKGTPVFAWKGETLEEYWWAAEQMLTWPGEPANMILDDGGDATMLVLRGAQFEKAGVVPPAEDDDSAEYKVFLNLLRERFETDKTKWTKIAESVKGVTEETTTGVLRLYQFEAAGELPFPAINVNDSVTKSKFDNKYGTRHSLIDGINRGTDVLIGGKKVLICGYGDVGKGCAESLAGQGARVQVTEIDPINALQALMDGFDVVTVEQAIGSADIVITSTGNKDIITLDHMKAMKDKAILGNIGHFDNEIDMAALERSGATRINIKPQVDEWTFDDGHSIVLLSEGRLLNLGNATGHPSFVMSNSFSNQVIAQIELWTKNDEYDNAVYRLAKHLDEKVARIHVEALGGTLTKLTKEQAEYINVDVEGPYKPEHYRY</sequence>
<feature type="chain" id="PRO_1000024734" description="Adenosylhomocysteinase">
    <location>
        <begin position="1"/>
        <end position="489"/>
    </location>
</feature>
<feature type="binding site" evidence="1">
    <location>
        <position position="68"/>
    </location>
    <ligand>
        <name>substrate</name>
    </ligand>
</feature>
<feature type="binding site" evidence="1">
    <location>
        <position position="151"/>
    </location>
    <ligand>
        <name>substrate</name>
    </ligand>
</feature>
<feature type="binding site" evidence="1">
    <location>
        <position position="213"/>
    </location>
    <ligand>
        <name>substrate</name>
    </ligand>
</feature>
<feature type="binding site" evidence="1">
    <location>
        <begin position="214"/>
        <end position="216"/>
    </location>
    <ligand>
        <name>NAD(+)</name>
        <dbReference type="ChEBI" id="CHEBI:57540"/>
    </ligand>
</feature>
<feature type="binding site" evidence="1">
    <location>
        <position position="243"/>
    </location>
    <ligand>
        <name>substrate</name>
    </ligand>
</feature>
<feature type="binding site" evidence="1">
    <location>
        <position position="247"/>
    </location>
    <ligand>
        <name>substrate</name>
    </ligand>
</feature>
<feature type="binding site" evidence="1">
    <location>
        <position position="248"/>
    </location>
    <ligand>
        <name>NAD(+)</name>
        <dbReference type="ChEBI" id="CHEBI:57540"/>
    </ligand>
</feature>
<feature type="binding site" evidence="1">
    <location>
        <begin position="277"/>
        <end position="282"/>
    </location>
    <ligand>
        <name>NAD(+)</name>
        <dbReference type="ChEBI" id="CHEBI:57540"/>
    </ligand>
</feature>
<feature type="binding site" evidence="1">
    <location>
        <position position="300"/>
    </location>
    <ligand>
        <name>NAD(+)</name>
        <dbReference type="ChEBI" id="CHEBI:57540"/>
    </ligand>
</feature>
<feature type="binding site" evidence="1">
    <location>
        <position position="335"/>
    </location>
    <ligand>
        <name>NAD(+)</name>
        <dbReference type="ChEBI" id="CHEBI:57540"/>
    </ligand>
</feature>
<feature type="binding site" evidence="1">
    <location>
        <begin position="356"/>
        <end position="358"/>
    </location>
    <ligand>
        <name>NAD(+)</name>
        <dbReference type="ChEBI" id="CHEBI:57540"/>
    </ligand>
</feature>
<feature type="binding site" evidence="1">
    <location>
        <position position="403"/>
    </location>
    <ligand>
        <name>NAD(+)</name>
        <dbReference type="ChEBI" id="CHEBI:57540"/>
    </ligand>
</feature>
<gene>
    <name evidence="1" type="primary">ahcY</name>
    <name type="ordered locus">Mkms_1354</name>
</gene>
<protein>
    <recommendedName>
        <fullName evidence="1">Adenosylhomocysteinase</fullName>
        <ecNumber evidence="1">3.13.2.1</ecNumber>
    </recommendedName>
    <alternativeName>
        <fullName evidence="1">S-adenosyl-L-homocysteine hydrolase</fullName>
        <shortName evidence="1">AdoHcyase</shortName>
    </alternativeName>
</protein>
<proteinExistence type="inferred from homology"/>
<reference key="1">
    <citation type="submission" date="2006-12" db="EMBL/GenBank/DDBJ databases">
        <title>Complete sequence of chromosome of Mycobacterium sp. KMS.</title>
        <authorList>
            <consortium name="US DOE Joint Genome Institute"/>
            <person name="Copeland A."/>
            <person name="Lucas S."/>
            <person name="Lapidus A."/>
            <person name="Barry K."/>
            <person name="Detter J.C."/>
            <person name="Glavina del Rio T."/>
            <person name="Hammon N."/>
            <person name="Israni S."/>
            <person name="Dalin E."/>
            <person name="Tice H."/>
            <person name="Pitluck S."/>
            <person name="Kiss H."/>
            <person name="Brettin T."/>
            <person name="Bruce D."/>
            <person name="Han C."/>
            <person name="Tapia R."/>
            <person name="Gilna P."/>
            <person name="Schmutz J."/>
            <person name="Larimer F."/>
            <person name="Land M."/>
            <person name="Hauser L."/>
            <person name="Kyrpides N."/>
            <person name="Mikhailova N."/>
            <person name="Miller C.D."/>
            <person name="Richardson P."/>
        </authorList>
    </citation>
    <scope>NUCLEOTIDE SEQUENCE [LARGE SCALE GENOMIC DNA]</scope>
    <source>
        <strain>KMS</strain>
    </source>
</reference>
<keyword id="KW-0963">Cytoplasm</keyword>
<keyword id="KW-0378">Hydrolase</keyword>
<keyword id="KW-0520">NAD</keyword>
<keyword id="KW-0554">One-carbon metabolism</keyword>
<accession>A1UCK8</accession>